<comment type="subunit">
    <text evidence="1">Part of the 50S ribosomal subunit.</text>
</comment>
<comment type="similarity">
    <text evidence="1">Belongs to the bacterial ribosomal protein bL31 family. Type B subfamily.</text>
</comment>
<keyword id="KW-0687">Ribonucleoprotein</keyword>
<keyword id="KW-0689">Ribosomal protein</keyword>
<organism>
    <name type="scientific">Escherichia coli (strain SMS-3-5 / SECEC)</name>
    <dbReference type="NCBI Taxonomy" id="439855"/>
    <lineage>
        <taxon>Bacteria</taxon>
        <taxon>Pseudomonadati</taxon>
        <taxon>Pseudomonadota</taxon>
        <taxon>Gammaproteobacteria</taxon>
        <taxon>Enterobacterales</taxon>
        <taxon>Enterobacteriaceae</taxon>
        <taxon>Escherichia</taxon>
    </lineage>
</organism>
<feature type="chain" id="PRO_1000126808" description="Large ribosomal subunit protein bL31B">
    <location>
        <begin position="1"/>
        <end position="87"/>
    </location>
</feature>
<name>RL31B_ECOSM</name>
<evidence type="ECO:0000255" key="1">
    <source>
        <dbReference type="HAMAP-Rule" id="MF_00502"/>
    </source>
</evidence>
<evidence type="ECO:0000305" key="2"/>
<proteinExistence type="inferred from homology"/>
<protein>
    <recommendedName>
        <fullName evidence="1">Large ribosomal subunit protein bL31B</fullName>
    </recommendedName>
    <alternativeName>
        <fullName evidence="2">50S ribosomal protein L31 type B</fullName>
    </alternativeName>
</protein>
<gene>
    <name evidence="1" type="primary">rpmE2</name>
    <name type="ordered locus">EcSMS35_0324</name>
</gene>
<dbReference type="EMBL" id="CP000970">
    <property type="protein sequence ID" value="ACB16990.1"/>
    <property type="molecule type" value="Genomic_DNA"/>
</dbReference>
<dbReference type="RefSeq" id="WP_000803998.1">
    <property type="nucleotide sequence ID" value="NC_010498.1"/>
</dbReference>
<dbReference type="SMR" id="B1LHW4"/>
<dbReference type="KEGG" id="ecm:EcSMS35_0324"/>
<dbReference type="HOGENOM" id="CLU_114306_2_1_6"/>
<dbReference type="Proteomes" id="UP000007011">
    <property type="component" value="Chromosome"/>
</dbReference>
<dbReference type="GO" id="GO:1990904">
    <property type="term" value="C:ribonucleoprotein complex"/>
    <property type="evidence" value="ECO:0007669"/>
    <property type="project" value="UniProtKB-KW"/>
</dbReference>
<dbReference type="GO" id="GO:0005840">
    <property type="term" value="C:ribosome"/>
    <property type="evidence" value="ECO:0007669"/>
    <property type="project" value="UniProtKB-KW"/>
</dbReference>
<dbReference type="GO" id="GO:0003735">
    <property type="term" value="F:structural constituent of ribosome"/>
    <property type="evidence" value="ECO:0007669"/>
    <property type="project" value="InterPro"/>
</dbReference>
<dbReference type="GO" id="GO:0006412">
    <property type="term" value="P:translation"/>
    <property type="evidence" value="ECO:0007669"/>
    <property type="project" value="UniProtKB-UniRule"/>
</dbReference>
<dbReference type="FunFam" id="4.10.830.30:FF:000002">
    <property type="entry name" value="50S ribosomal protein L31 type B"/>
    <property type="match status" value="1"/>
</dbReference>
<dbReference type="Gene3D" id="4.10.830.30">
    <property type="entry name" value="Ribosomal protein L31"/>
    <property type="match status" value="1"/>
</dbReference>
<dbReference type="HAMAP" id="MF_00502">
    <property type="entry name" value="Ribosomal_bL31_2"/>
    <property type="match status" value="1"/>
</dbReference>
<dbReference type="InterPro" id="IPR034704">
    <property type="entry name" value="Ribosomal_bL28/bL31-like_sf"/>
</dbReference>
<dbReference type="InterPro" id="IPR002150">
    <property type="entry name" value="Ribosomal_bL31"/>
</dbReference>
<dbReference type="InterPro" id="IPR027493">
    <property type="entry name" value="Ribosomal_bL31_B"/>
</dbReference>
<dbReference type="InterPro" id="IPR042105">
    <property type="entry name" value="Ribosomal_bL31_sf"/>
</dbReference>
<dbReference type="NCBIfam" id="TIGR00105">
    <property type="entry name" value="L31"/>
    <property type="match status" value="1"/>
</dbReference>
<dbReference type="NCBIfam" id="NF002462">
    <property type="entry name" value="PRK01678.1"/>
    <property type="match status" value="1"/>
</dbReference>
<dbReference type="PANTHER" id="PTHR33280">
    <property type="entry name" value="50S RIBOSOMAL PROTEIN L31, CHLOROPLASTIC"/>
    <property type="match status" value="1"/>
</dbReference>
<dbReference type="PANTHER" id="PTHR33280:SF1">
    <property type="entry name" value="LARGE RIBOSOMAL SUBUNIT PROTEIN BL31C"/>
    <property type="match status" value="1"/>
</dbReference>
<dbReference type="Pfam" id="PF01197">
    <property type="entry name" value="Ribosomal_L31"/>
    <property type="match status" value="1"/>
</dbReference>
<dbReference type="PRINTS" id="PR01249">
    <property type="entry name" value="RIBOSOMALL31"/>
</dbReference>
<dbReference type="SUPFAM" id="SSF143800">
    <property type="entry name" value="L28p-like"/>
    <property type="match status" value="1"/>
</dbReference>
<dbReference type="PROSITE" id="PS01143">
    <property type="entry name" value="RIBOSOMAL_L31"/>
    <property type="match status" value="1"/>
</dbReference>
<sequence>MKPNIHPEYRTVVFHDTSVDEYFKIGSTIKTDREIELDGVTYPYVTIDVSSKSHPFYTGKLRTVASEGNVARFTQRFGRFVSTKKGA</sequence>
<reference key="1">
    <citation type="journal article" date="2008" name="J. Bacteriol.">
        <title>Insights into the environmental resistance gene pool from the genome sequence of the multidrug-resistant environmental isolate Escherichia coli SMS-3-5.</title>
        <authorList>
            <person name="Fricke W.F."/>
            <person name="Wright M.S."/>
            <person name="Lindell A.H."/>
            <person name="Harkins D.M."/>
            <person name="Baker-Austin C."/>
            <person name="Ravel J."/>
            <person name="Stepanauskas R."/>
        </authorList>
    </citation>
    <scope>NUCLEOTIDE SEQUENCE [LARGE SCALE GENOMIC DNA]</scope>
    <source>
        <strain>SMS-3-5 / SECEC</strain>
    </source>
</reference>
<accession>B1LHW4</accession>